<dbReference type="EC" id="3.1.3.2"/>
<dbReference type="EMBL" id="AK049131">
    <property type="protein sequence ID" value="BAC33559.1"/>
    <property type="status" value="ALT_INIT"/>
    <property type="molecule type" value="mRNA"/>
</dbReference>
<dbReference type="EMBL" id="BC094908">
    <property type="protein sequence ID" value="AAH94908.1"/>
    <property type="status" value="ALT_INIT"/>
    <property type="molecule type" value="mRNA"/>
</dbReference>
<dbReference type="EMBL" id="BC132375">
    <property type="protein sequence ID" value="AAI32376.1"/>
    <property type="status" value="ALT_INIT"/>
    <property type="molecule type" value="mRNA"/>
</dbReference>
<dbReference type="CCDS" id="CCDS21050.2"/>
<dbReference type="RefSeq" id="NP_780528.2">
    <property type="nucleotide sequence ID" value="NM_175319.5"/>
</dbReference>
<dbReference type="RefSeq" id="XP_006539510.1">
    <property type="nucleotide sequence ID" value="XM_006539447.3"/>
</dbReference>
<dbReference type="RefSeq" id="XP_006539512.1">
    <property type="nucleotide sequence ID" value="XM_006539449.3"/>
</dbReference>
<dbReference type="RefSeq" id="XP_006539513.1">
    <property type="nucleotide sequence ID" value="XM_006539450.3"/>
</dbReference>
<dbReference type="SMR" id="Q8BX37"/>
<dbReference type="FunCoup" id="Q8BX37">
    <property type="interactions" value="12"/>
</dbReference>
<dbReference type="STRING" id="10090.ENSMUSP00000045437"/>
<dbReference type="GlyCosmos" id="Q8BX37">
    <property type="glycosylation" value="3 sites, No reported glycans"/>
</dbReference>
<dbReference type="GlyGen" id="Q8BX37">
    <property type="glycosylation" value="3 sites, 1 N-linked glycan (1 site)"/>
</dbReference>
<dbReference type="iPTMnet" id="Q8BX37"/>
<dbReference type="PhosphoSitePlus" id="Q8BX37"/>
<dbReference type="PaxDb" id="10090-ENSMUSP00000045437"/>
<dbReference type="ProteomicsDB" id="285980"/>
<dbReference type="Antibodypedia" id="48007">
    <property type="antibodies" value="9 antibodies from 5 providers"/>
</dbReference>
<dbReference type="DNASU" id="101744"/>
<dbReference type="Ensembl" id="ENSMUST00000159560.3">
    <property type="protein sequence ID" value="ENSMUSP00000147133.3"/>
    <property type="gene ID" value="ENSMUSG00000037469.12"/>
</dbReference>
<dbReference type="Ensembl" id="ENSMUST00000239470.2">
    <property type="protein sequence ID" value="ENSMUSP00000159320.2"/>
    <property type="gene ID" value="ENSMUSG00000037469.12"/>
</dbReference>
<dbReference type="GeneID" id="101744"/>
<dbReference type="KEGG" id="mmu:101744"/>
<dbReference type="AGR" id="MGI:2142121"/>
<dbReference type="CTD" id="390928"/>
<dbReference type="MGI" id="MGI:2142121">
    <property type="gene designation" value="Acp7"/>
</dbReference>
<dbReference type="VEuPathDB" id="HostDB:ENSMUSG00000037469"/>
<dbReference type="eggNOG" id="KOG1378">
    <property type="taxonomic scope" value="Eukaryota"/>
</dbReference>
<dbReference type="GeneTree" id="ENSGT00390000015485"/>
<dbReference type="InParanoid" id="Q8BX37"/>
<dbReference type="OrthoDB" id="45007at2759"/>
<dbReference type="BioGRID-ORCS" id="101744">
    <property type="hits" value="1 hit in 77 CRISPR screens"/>
</dbReference>
<dbReference type="ChiTaRS" id="Acp7">
    <property type="organism name" value="mouse"/>
</dbReference>
<dbReference type="PRO" id="PR:Q8BX37"/>
<dbReference type="Proteomes" id="UP000000589">
    <property type="component" value="Chromosome 7"/>
</dbReference>
<dbReference type="RNAct" id="Q8BX37">
    <property type="molecule type" value="protein"/>
</dbReference>
<dbReference type="Bgee" id="ENSMUSG00000037469">
    <property type="expression patterns" value="Expressed in lip and 44 other cell types or tissues"/>
</dbReference>
<dbReference type="ExpressionAtlas" id="Q8BX37">
    <property type="expression patterns" value="baseline and differential"/>
</dbReference>
<dbReference type="GO" id="GO:0005576">
    <property type="term" value="C:extracellular region"/>
    <property type="evidence" value="ECO:0007669"/>
    <property type="project" value="UniProtKB-SubCell"/>
</dbReference>
<dbReference type="GO" id="GO:0003993">
    <property type="term" value="F:acid phosphatase activity"/>
    <property type="evidence" value="ECO:0007669"/>
    <property type="project" value="UniProtKB-EC"/>
</dbReference>
<dbReference type="GO" id="GO:0046872">
    <property type="term" value="F:metal ion binding"/>
    <property type="evidence" value="ECO:0007669"/>
    <property type="project" value="UniProtKB-KW"/>
</dbReference>
<dbReference type="CDD" id="cd00839">
    <property type="entry name" value="MPP_PAPs"/>
    <property type="match status" value="1"/>
</dbReference>
<dbReference type="Gene3D" id="3.60.21.10">
    <property type="match status" value="1"/>
</dbReference>
<dbReference type="Gene3D" id="2.60.40.380">
    <property type="entry name" value="Purple acid phosphatase-like, N-terminal"/>
    <property type="match status" value="1"/>
</dbReference>
<dbReference type="InterPro" id="IPR004843">
    <property type="entry name" value="Calcineurin-like_PHP_ApaH"/>
</dbReference>
<dbReference type="InterPro" id="IPR029052">
    <property type="entry name" value="Metallo-depent_PP-like"/>
</dbReference>
<dbReference type="InterPro" id="IPR041792">
    <property type="entry name" value="MPP_PAP"/>
</dbReference>
<dbReference type="InterPro" id="IPR008963">
    <property type="entry name" value="Purple_acid_Pase-like_N"/>
</dbReference>
<dbReference type="InterPro" id="IPR015914">
    <property type="entry name" value="Purple_acid_Pase_N"/>
</dbReference>
<dbReference type="InterPro" id="IPR025733">
    <property type="entry name" value="Purple_acid_PPase_C_dom"/>
</dbReference>
<dbReference type="PANTHER" id="PTHR45867:SF3">
    <property type="entry name" value="ACID PHOSPHATASE TYPE 7"/>
    <property type="match status" value="1"/>
</dbReference>
<dbReference type="PANTHER" id="PTHR45867">
    <property type="entry name" value="PURPLE ACID PHOSPHATASE"/>
    <property type="match status" value="1"/>
</dbReference>
<dbReference type="Pfam" id="PF00149">
    <property type="entry name" value="Metallophos"/>
    <property type="match status" value="1"/>
</dbReference>
<dbReference type="Pfam" id="PF14008">
    <property type="entry name" value="Metallophos_C"/>
    <property type="match status" value="1"/>
</dbReference>
<dbReference type="Pfam" id="PF16656">
    <property type="entry name" value="Pur_ac_phosph_N"/>
    <property type="match status" value="1"/>
</dbReference>
<dbReference type="SUPFAM" id="SSF56300">
    <property type="entry name" value="Metallo-dependent phosphatases"/>
    <property type="match status" value="1"/>
</dbReference>
<dbReference type="SUPFAM" id="SSF49363">
    <property type="entry name" value="Purple acid phosphatase, N-terminal domain"/>
    <property type="match status" value="1"/>
</dbReference>
<protein>
    <recommendedName>
        <fullName evidence="5">Acid phosphatase type 7</fullName>
        <ecNumber>3.1.3.2</ecNumber>
    </recommendedName>
    <alternativeName>
        <fullName evidence="4">Purple acid phosphatase long form</fullName>
    </alternativeName>
</protein>
<name>ACP7_MOUSE</name>
<comment type="catalytic activity">
    <reaction>
        <text>a phosphate monoester + H2O = an alcohol + phosphate</text>
        <dbReference type="Rhea" id="RHEA:15017"/>
        <dbReference type="ChEBI" id="CHEBI:15377"/>
        <dbReference type="ChEBI" id="CHEBI:30879"/>
        <dbReference type="ChEBI" id="CHEBI:43474"/>
        <dbReference type="ChEBI" id="CHEBI:67140"/>
        <dbReference type="EC" id="3.1.3.2"/>
    </reaction>
</comment>
<comment type="cofactor">
    <cofactor evidence="1">
        <name>Fe cation</name>
        <dbReference type="ChEBI" id="CHEBI:24875"/>
    </cofactor>
    <text evidence="1">Binds 1 Fe cation per subunit.</text>
</comment>
<comment type="cofactor">
    <cofactor evidence="1">
        <name>Zn(2+)</name>
        <dbReference type="ChEBI" id="CHEBI:29105"/>
    </cofactor>
    <text evidence="1">Binds 1 zinc ion per subunit.</text>
</comment>
<comment type="subcellular location">
    <subcellularLocation>
        <location evidence="5">Secreted</location>
    </subcellularLocation>
</comment>
<comment type="similarity">
    <text evidence="5">Belongs to the metallophosphoesterase superfamily. Purple acid phosphatase family.</text>
</comment>
<comment type="sequence caution" evidence="5">
    <conflict type="erroneous initiation">
        <sequence resource="EMBL-CDS" id="AAH94908"/>
    </conflict>
</comment>
<comment type="sequence caution" evidence="5">
    <conflict type="erroneous initiation">
        <sequence resource="EMBL-CDS" id="AAI32376"/>
    </conflict>
</comment>
<comment type="sequence caution" evidence="5">
    <conflict type="erroneous initiation">
        <sequence resource="EMBL-CDS" id="BAC33559"/>
    </conflict>
</comment>
<evidence type="ECO:0000250" key="1"/>
<evidence type="ECO:0000250" key="2">
    <source>
        <dbReference type="UniProtKB" id="Q6ZNF0"/>
    </source>
</evidence>
<evidence type="ECO:0000255" key="3"/>
<evidence type="ECO:0000303" key="4">
    <source>
    </source>
</evidence>
<evidence type="ECO:0000305" key="5"/>
<organism>
    <name type="scientific">Mus musculus</name>
    <name type="common">Mouse</name>
    <dbReference type="NCBI Taxonomy" id="10090"/>
    <lineage>
        <taxon>Eukaryota</taxon>
        <taxon>Metazoa</taxon>
        <taxon>Chordata</taxon>
        <taxon>Craniata</taxon>
        <taxon>Vertebrata</taxon>
        <taxon>Euteleostomi</taxon>
        <taxon>Mammalia</taxon>
        <taxon>Eutheria</taxon>
        <taxon>Euarchontoglires</taxon>
        <taxon>Glires</taxon>
        <taxon>Rodentia</taxon>
        <taxon>Myomorpha</taxon>
        <taxon>Muroidea</taxon>
        <taxon>Muridae</taxon>
        <taxon>Murinae</taxon>
        <taxon>Mus</taxon>
        <taxon>Mus</taxon>
    </lineage>
</organism>
<proteinExistence type="evidence at transcript level"/>
<sequence length="438" mass="50663">MSPFLGGWLFFCMLLPFSPGVQGAQEYPHVTPEQIHLSYLGEPGTMTVTWTTWAPARSEVQFGSQLSGPLPFRAHGTARAFVDGGVLRRKLYIHRVTLRKLQPGAQYVYRCGSSQGWSRRFRFTALKNGVHWSPRLAVFGDMGADNPKALPRLRRDTQQGMFDAVLHVGDFAYNMDQDNARVGDRFMRLIEPVAASLPYMTCPGNHEQRYNFSNYKARFSMPGDNEGLWYSWDLGPAHIISFSTEVYFFLHYGRHLIEKQFRWLENDLQKANKNRVARPWIITMGHRPMYCSNADLDDCTRHESRVRKGLHGKLFGLEDLFHKYGVDLEFWAHEHSYERLWPIYNYQVFNGSLESPYTNPRGPVHIITGSAGCEELLTPFVRKPRPWSAVRVKEYGYTRMHILNGTHMHIQQVSDDQDGKIVDDVWVVRPLLGRMMYH</sequence>
<keyword id="KW-0325">Glycoprotein</keyword>
<keyword id="KW-0378">Hydrolase</keyword>
<keyword id="KW-0408">Iron</keyword>
<keyword id="KW-0479">Metal-binding</keyword>
<keyword id="KW-1185">Reference proteome</keyword>
<keyword id="KW-0964">Secreted</keyword>
<keyword id="KW-0732">Signal</keyword>
<keyword id="KW-0862">Zinc</keyword>
<accession>Q8BX37</accession>
<feature type="signal peptide" evidence="3">
    <location>
        <begin position="1"/>
        <end position="23"/>
    </location>
</feature>
<feature type="chain" id="PRO_0000316825" description="Acid phosphatase type 7">
    <location>
        <begin position="24"/>
        <end position="438"/>
    </location>
</feature>
<feature type="binding site" evidence="1">
    <location>
        <position position="141"/>
    </location>
    <ligand>
        <name>Fe cation</name>
        <dbReference type="ChEBI" id="CHEBI:24875"/>
    </ligand>
</feature>
<feature type="binding site" evidence="1">
    <location>
        <position position="170"/>
    </location>
    <ligand>
        <name>Fe cation</name>
        <dbReference type="ChEBI" id="CHEBI:24875"/>
    </ligand>
</feature>
<feature type="binding site" evidence="1">
    <location>
        <position position="170"/>
    </location>
    <ligand>
        <name>Zn(2+)</name>
        <dbReference type="ChEBI" id="CHEBI:29105"/>
    </ligand>
</feature>
<feature type="binding site" evidence="1">
    <location>
        <position position="173"/>
    </location>
    <ligand>
        <name>Fe cation</name>
        <dbReference type="ChEBI" id="CHEBI:24875"/>
    </ligand>
</feature>
<feature type="binding site" evidence="1">
    <location>
        <position position="205"/>
    </location>
    <ligand>
        <name>Zn(2+)</name>
        <dbReference type="ChEBI" id="CHEBI:29105"/>
    </ligand>
</feature>
<feature type="binding site" evidence="1">
    <location>
        <position position="286"/>
    </location>
    <ligand>
        <name>Zn(2+)</name>
        <dbReference type="ChEBI" id="CHEBI:29105"/>
    </ligand>
</feature>
<feature type="binding site" evidence="1">
    <location>
        <position position="333"/>
    </location>
    <ligand>
        <name>Zn(2+)</name>
        <dbReference type="ChEBI" id="CHEBI:29105"/>
    </ligand>
</feature>
<feature type="binding site" evidence="1">
    <location>
        <position position="335"/>
    </location>
    <ligand>
        <name>Fe cation</name>
        <dbReference type="ChEBI" id="CHEBI:24875"/>
    </ligand>
</feature>
<feature type="glycosylation site" description="N-linked (GlcNAc...) asparagine" evidence="3">
    <location>
        <position position="211"/>
    </location>
</feature>
<feature type="glycosylation site" description="N-linked (GlcNAc...) asparagine" evidence="3">
    <location>
        <position position="350"/>
    </location>
</feature>
<feature type="glycosylation site" description="N-linked (GlcNAc...) asparagine" evidence="3">
    <location>
        <position position="404"/>
    </location>
</feature>
<gene>
    <name evidence="2" type="primary">Acp7</name>
    <name evidence="4" type="synonym">Papl</name>
    <name evidence="4" type="synonym">Papl1</name>
</gene>
<reference key="1">
    <citation type="journal article" date="2005" name="Science">
        <title>The transcriptional landscape of the mammalian genome.</title>
        <authorList>
            <person name="Carninci P."/>
            <person name="Kasukawa T."/>
            <person name="Katayama S."/>
            <person name="Gough J."/>
            <person name="Frith M.C."/>
            <person name="Maeda N."/>
            <person name="Oyama R."/>
            <person name="Ravasi T."/>
            <person name="Lenhard B."/>
            <person name="Wells C."/>
            <person name="Kodzius R."/>
            <person name="Shimokawa K."/>
            <person name="Bajic V.B."/>
            <person name="Brenner S.E."/>
            <person name="Batalov S."/>
            <person name="Forrest A.R."/>
            <person name="Zavolan M."/>
            <person name="Davis M.J."/>
            <person name="Wilming L.G."/>
            <person name="Aidinis V."/>
            <person name="Allen J.E."/>
            <person name="Ambesi-Impiombato A."/>
            <person name="Apweiler R."/>
            <person name="Aturaliya R.N."/>
            <person name="Bailey T.L."/>
            <person name="Bansal M."/>
            <person name="Baxter L."/>
            <person name="Beisel K.W."/>
            <person name="Bersano T."/>
            <person name="Bono H."/>
            <person name="Chalk A.M."/>
            <person name="Chiu K.P."/>
            <person name="Choudhary V."/>
            <person name="Christoffels A."/>
            <person name="Clutterbuck D.R."/>
            <person name="Crowe M.L."/>
            <person name="Dalla E."/>
            <person name="Dalrymple B.P."/>
            <person name="de Bono B."/>
            <person name="Della Gatta G."/>
            <person name="di Bernardo D."/>
            <person name="Down T."/>
            <person name="Engstrom P."/>
            <person name="Fagiolini M."/>
            <person name="Faulkner G."/>
            <person name="Fletcher C.F."/>
            <person name="Fukushima T."/>
            <person name="Furuno M."/>
            <person name="Futaki S."/>
            <person name="Gariboldi M."/>
            <person name="Georgii-Hemming P."/>
            <person name="Gingeras T.R."/>
            <person name="Gojobori T."/>
            <person name="Green R.E."/>
            <person name="Gustincich S."/>
            <person name="Harbers M."/>
            <person name="Hayashi Y."/>
            <person name="Hensch T.K."/>
            <person name="Hirokawa N."/>
            <person name="Hill D."/>
            <person name="Huminiecki L."/>
            <person name="Iacono M."/>
            <person name="Ikeo K."/>
            <person name="Iwama A."/>
            <person name="Ishikawa T."/>
            <person name="Jakt M."/>
            <person name="Kanapin A."/>
            <person name="Katoh M."/>
            <person name="Kawasawa Y."/>
            <person name="Kelso J."/>
            <person name="Kitamura H."/>
            <person name="Kitano H."/>
            <person name="Kollias G."/>
            <person name="Krishnan S.P."/>
            <person name="Kruger A."/>
            <person name="Kummerfeld S.K."/>
            <person name="Kurochkin I.V."/>
            <person name="Lareau L.F."/>
            <person name="Lazarevic D."/>
            <person name="Lipovich L."/>
            <person name="Liu J."/>
            <person name="Liuni S."/>
            <person name="McWilliam S."/>
            <person name="Madan Babu M."/>
            <person name="Madera M."/>
            <person name="Marchionni L."/>
            <person name="Matsuda H."/>
            <person name="Matsuzawa S."/>
            <person name="Miki H."/>
            <person name="Mignone F."/>
            <person name="Miyake S."/>
            <person name="Morris K."/>
            <person name="Mottagui-Tabar S."/>
            <person name="Mulder N."/>
            <person name="Nakano N."/>
            <person name="Nakauchi H."/>
            <person name="Ng P."/>
            <person name="Nilsson R."/>
            <person name="Nishiguchi S."/>
            <person name="Nishikawa S."/>
            <person name="Nori F."/>
            <person name="Ohara O."/>
            <person name="Okazaki Y."/>
            <person name="Orlando V."/>
            <person name="Pang K.C."/>
            <person name="Pavan W.J."/>
            <person name="Pavesi G."/>
            <person name="Pesole G."/>
            <person name="Petrovsky N."/>
            <person name="Piazza S."/>
            <person name="Reed J."/>
            <person name="Reid J.F."/>
            <person name="Ring B.Z."/>
            <person name="Ringwald M."/>
            <person name="Rost B."/>
            <person name="Ruan Y."/>
            <person name="Salzberg S.L."/>
            <person name="Sandelin A."/>
            <person name="Schneider C."/>
            <person name="Schoenbach C."/>
            <person name="Sekiguchi K."/>
            <person name="Semple C.A."/>
            <person name="Seno S."/>
            <person name="Sessa L."/>
            <person name="Sheng Y."/>
            <person name="Shibata Y."/>
            <person name="Shimada H."/>
            <person name="Shimada K."/>
            <person name="Silva D."/>
            <person name="Sinclair B."/>
            <person name="Sperling S."/>
            <person name="Stupka E."/>
            <person name="Sugiura K."/>
            <person name="Sultana R."/>
            <person name="Takenaka Y."/>
            <person name="Taki K."/>
            <person name="Tammoja K."/>
            <person name="Tan S.L."/>
            <person name="Tang S."/>
            <person name="Taylor M.S."/>
            <person name="Tegner J."/>
            <person name="Teichmann S.A."/>
            <person name="Ueda H.R."/>
            <person name="van Nimwegen E."/>
            <person name="Verardo R."/>
            <person name="Wei C.L."/>
            <person name="Yagi K."/>
            <person name="Yamanishi H."/>
            <person name="Zabarovsky E."/>
            <person name="Zhu S."/>
            <person name="Zimmer A."/>
            <person name="Hide W."/>
            <person name="Bult C."/>
            <person name="Grimmond S.M."/>
            <person name="Teasdale R.D."/>
            <person name="Liu E.T."/>
            <person name="Brusic V."/>
            <person name="Quackenbush J."/>
            <person name="Wahlestedt C."/>
            <person name="Mattick J.S."/>
            <person name="Hume D.A."/>
            <person name="Kai C."/>
            <person name="Sasaki D."/>
            <person name="Tomaru Y."/>
            <person name="Fukuda S."/>
            <person name="Kanamori-Katayama M."/>
            <person name="Suzuki M."/>
            <person name="Aoki J."/>
            <person name="Arakawa T."/>
            <person name="Iida J."/>
            <person name="Imamura K."/>
            <person name="Itoh M."/>
            <person name="Kato T."/>
            <person name="Kawaji H."/>
            <person name="Kawagashira N."/>
            <person name="Kawashima T."/>
            <person name="Kojima M."/>
            <person name="Kondo S."/>
            <person name="Konno H."/>
            <person name="Nakano K."/>
            <person name="Ninomiya N."/>
            <person name="Nishio T."/>
            <person name="Okada M."/>
            <person name="Plessy C."/>
            <person name="Shibata K."/>
            <person name="Shiraki T."/>
            <person name="Suzuki S."/>
            <person name="Tagami M."/>
            <person name="Waki K."/>
            <person name="Watahiki A."/>
            <person name="Okamura-Oho Y."/>
            <person name="Suzuki H."/>
            <person name="Kawai J."/>
            <person name="Hayashizaki Y."/>
        </authorList>
    </citation>
    <scope>NUCLEOTIDE SEQUENCE [LARGE SCALE MRNA]</scope>
    <source>
        <strain>C57BL/6J</strain>
    </source>
</reference>
<reference key="2">
    <citation type="journal article" date="2004" name="Genome Res.">
        <title>The status, quality, and expansion of the NIH full-length cDNA project: the Mammalian Gene Collection (MGC).</title>
        <authorList>
            <consortium name="The MGC Project Team"/>
        </authorList>
    </citation>
    <scope>NUCLEOTIDE SEQUENCE [LARGE SCALE MRNA]</scope>
    <source>
        <tissue>Brain</tissue>
    </source>
</reference>
<reference key="3">
    <citation type="journal article" date="2006" name="Gene">
        <title>Identification and molecular modeling of a novel, plant-like, human purple acid phosphatase.</title>
        <authorList>
            <person name="Flanagan J.U."/>
            <person name="Cassady A.I."/>
            <person name="Schenk G."/>
            <person name="Guddat L.W."/>
            <person name="Hume D.A."/>
        </authorList>
    </citation>
    <scope>IDENTIFICATION</scope>
</reference>